<accession>A8GHY1</accession>
<keyword id="KW-0408">Iron</keyword>
<keyword id="KW-0479">Metal-binding</keyword>
<comment type="function">
    <text evidence="1">Is able to transfer iron-sulfur clusters to apo-ferredoxin. Multiple cycles of [2Fe2S] cluster formation and transfer are observed, suggesting that IscA acts catalytically. Recruits intracellular free iron so as to provide iron for the assembly of transient iron-sulfur cluster in IscU in the presence of IscS, L-cysteine and the thioredoxin reductase system TrxA/TrxB.</text>
</comment>
<comment type="cofactor">
    <cofactor evidence="1">
        <name>Fe cation</name>
        <dbReference type="ChEBI" id="CHEBI:24875"/>
    </cofactor>
    <text evidence="1">Binds 2 iron ions per dimer. The dimer may bind additional iron ions.</text>
</comment>
<comment type="subunit">
    <text evidence="1">Homodimer; may form tetramers and higher multimers.</text>
</comment>
<comment type="similarity">
    <text evidence="1">Belongs to the HesB/IscA family.</text>
</comment>
<proteinExistence type="inferred from homology"/>
<evidence type="ECO:0000255" key="1">
    <source>
        <dbReference type="HAMAP-Rule" id="MF_01429"/>
    </source>
</evidence>
<gene>
    <name evidence="1" type="primary">iscA</name>
    <name type="ordered locus">Spro_3625</name>
</gene>
<dbReference type="EMBL" id="CP000826">
    <property type="protein sequence ID" value="ABV42721.1"/>
    <property type="molecule type" value="Genomic_DNA"/>
</dbReference>
<dbReference type="SMR" id="A8GHY1"/>
<dbReference type="STRING" id="399741.Spro_3625"/>
<dbReference type="KEGG" id="spe:Spro_3625"/>
<dbReference type="eggNOG" id="COG0316">
    <property type="taxonomic scope" value="Bacteria"/>
</dbReference>
<dbReference type="HOGENOM" id="CLU_069054_5_1_6"/>
<dbReference type="OrthoDB" id="9801228at2"/>
<dbReference type="GO" id="GO:0005829">
    <property type="term" value="C:cytosol"/>
    <property type="evidence" value="ECO:0007669"/>
    <property type="project" value="TreeGrafter"/>
</dbReference>
<dbReference type="GO" id="GO:0051537">
    <property type="term" value="F:2 iron, 2 sulfur cluster binding"/>
    <property type="evidence" value="ECO:0007669"/>
    <property type="project" value="TreeGrafter"/>
</dbReference>
<dbReference type="GO" id="GO:0005506">
    <property type="term" value="F:iron ion binding"/>
    <property type="evidence" value="ECO:0007669"/>
    <property type="project" value="UniProtKB-UniRule"/>
</dbReference>
<dbReference type="GO" id="GO:0016226">
    <property type="term" value="P:iron-sulfur cluster assembly"/>
    <property type="evidence" value="ECO:0007669"/>
    <property type="project" value="UniProtKB-UniRule"/>
</dbReference>
<dbReference type="FunFam" id="2.60.300.12:FF:000001">
    <property type="entry name" value="Iron-binding protein IscA"/>
    <property type="match status" value="1"/>
</dbReference>
<dbReference type="Gene3D" id="2.60.300.12">
    <property type="entry name" value="HesB-like domain"/>
    <property type="match status" value="1"/>
</dbReference>
<dbReference type="HAMAP" id="MF_01429">
    <property type="entry name" value="Fe_S_insert_IscA"/>
    <property type="match status" value="1"/>
</dbReference>
<dbReference type="InterPro" id="IPR050322">
    <property type="entry name" value="Fe-S_cluster_asmbl/transfer"/>
</dbReference>
<dbReference type="InterPro" id="IPR000361">
    <property type="entry name" value="FeS_biogenesis"/>
</dbReference>
<dbReference type="InterPro" id="IPR016092">
    <property type="entry name" value="FeS_cluster_insertion"/>
</dbReference>
<dbReference type="InterPro" id="IPR017870">
    <property type="entry name" value="FeS_cluster_insertion_CS"/>
</dbReference>
<dbReference type="InterPro" id="IPR035903">
    <property type="entry name" value="HesB-like_dom_sf"/>
</dbReference>
<dbReference type="InterPro" id="IPR011302">
    <property type="entry name" value="IscA_proteobacteria"/>
</dbReference>
<dbReference type="NCBIfam" id="TIGR00049">
    <property type="entry name" value="iron-sulfur cluster assembly accessory protein"/>
    <property type="match status" value="1"/>
</dbReference>
<dbReference type="NCBIfam" id="TIGR02011">
    <property type="entry name" value="IscA"/>
    <property type="match status" value="1"/>
</dbReference>
<dbReference type="NCBIfam" id="NF007049">
    <property type="entry name" value="PRK09502.1"/>
    <property type="match status" value="1"/>
</dbReference>
<dbReference type="PANTHER" id="PTHR10072:SF41">
    <property type="entry name" value="IRON-SULFUR CLUSTER ASSEMBLY 1 HOMOLOG, MITOCHONDRIAL"/>
    <property type="match status" value="1"/>
</dbReference>
<dbReference type="PANTHER" id="PTHR10072">
    <property type="entry name" value="IRON-SULFUR CLUSTER ASSEMBLY PROTEIN"/>
    <property type="match status" value="1"/>
</dbReference>
<dbReference type="Pfam" id="PF01521">
    <property type="entry name" value="Fe-S_biosyn"/>
    <property type="match status" value="1"/>
</dbReference>
<dbReference type="SUPFAM" id="SSF89360">
    <property type="entry name" value="HesB-like domain"/>
    <property type="match status" value="1"/>
</dbReference>
<dbReference type="PROSITE" id="PS01152">
    <property type="entry name" value="HESB"/>
    <property type="match status" value="1"/>
</dbReference>
<feature type="chain" id="PRO_1000068521" description="Iron-binding protein IscA">
    <location>
        <begin position="1"/>
        <end position="107"/>
    </location>
</feature>
<feature type="binding site" evidence="1">
    <location>
        <position position="35"/>
    </location>
    <ligand>
        <name>Fe cation</name>
        <dbReference type="ChEBI" id="CHEBI:24875"/>
    </ligand>
</feature>
<feature type="binding site" evidence="1">
    <location>
        <position position="99"/>
    </location>
    <ligand>
        <name>Fe cation</name>
        <dbReference type="ChEBI" id="CHEBI:24875"/>
    </ligand>
</feature>
<feature type="binding site" evidence="1">
    <location>
        <position position="101"/>
    </location>
    <ligand>
        <name>Fe cation</name>
        <dbReference type="ChEBI" id="CHEBI:24875"/>
    </ligand>
</feature>
<protein>
    <recommendedName>
        <fullName evidence="1">Iron-binding protein IscA</fullName>
    </recommendedName>
    <alternativeName>
        <fullName evidence="1">Iron-sulfur cluster assembly protein</fullName>
    </alternativeName>
</protein>
<name>ISCA_SERP5</name>
<sequence>MSITMSDSAAQRVQAFMNNRGKGLGLRLGVRTSGCSGMAYVLEFVDDMNDDDIVFENKGVKVIIDGKSLVYLDGTELDFVKEGLNEGFKFNNPNVSSECGCGESFNV</sequence>
<organism>
    <name type="scientific">Serratia proteamaculans (strain 568)</name>
    <dbReference type="NCBI Taxonomy" id="399741"/>
    <lineage>
        <taxon>Bacteria</taxon>
        <taxon>Pseudomonadati</taxon>
        <taxon>Pseudomonadota</taxon>
        <taxon>Gammaproteobacteria</taxon>
        <taxon>Enterobacterales</taxon>
        <taxon>Yersiniaceae</taxon>
        <taxon>Serratia</taxon>
    </lineage>
</organism>
<reference key="1">
    <citation type="submission" date="2007-09" db="EMBL/GenBank/DDBJ databases">
        <title>Complete sequence of chromosome of Serratia proteamaculans 568.</title>
        <authorList>
            <consortium name="US DOE Joint Genome Institute"/>
            <person name="Copeland A."/>
            <person name="Lucas S."/>
            <person name="Lapidus A."/>
            <person name="Barry K."/>
            <person name="Glavina del Rio T."/>
            <person name="Dalin E."/>
            <person name="Tice H."/>
            <person name="Pitluck S."/>
            <person name="Chain P."/>
            <person name="Malfatti S."/>
            <person name="Shin M."/>
            <person name="Vergez L."/>
            <person name="Schmutz J."/>
            <person name="Larimer F."/>
            <person name="Land M."/>
            <person name="Hauser L."/>
            <person name="Kyrpides N."/>
            <person name="Kim E."/>
            <person name="Taghavi S."/>
            <person name="Newman L."/>
            <person name="Vangronsveld J."/>
            <person name="van der Lelie D."/>
            <person name="Richardson P."/>
        </authorList>
    </citation>
    <scope>NUCLEOTIDE SEQUENCE [LARGE SCALE GENOMIC DNA]</scope>
    <source>
        <strain>568</strain>
    </source>
</reference>